<keyword id="KW-1015">Disulfide bond</keyword>
<keyword id="KW-1185">Reference proteome</keyword>
<keyword id="KW-0964">Secreted</keyword>
<keyword id="KW-0732">Signal</keyword>
<name>MSMB_PAPAN</name>
<reference key="1">
    <citation type="journal article" date="1997" name="DNA Cell Biol.">
        <title>Molecular cloning and gene expression analysis of PSP94 (prostate secretory protein of 94 amino acids) in primates.</title>
        <authorList>
            <person name="Xuan J.W."/>
            <person name="Wu D."/>
            <person name="Guo Y."/>
            <person name="Garde S."/>
            <person name="Shum D.T."/>
            <person name="Mbikay M."/>
            <person name="Zhong R."/>
            <person name="Chin J.L."/>
        </authorList>
    </citation>
    <scope>NUCLEOTIDE SEQUENCE [MRNA]</scope>
    <source>
        <tissue>Prostate</tissue>
    </source>
</reference>
<proteinExistence type="inferred from homology"/>
<protein>
    <recommendedName>
        <fullName>Beta-microseminoprotein</fullName>
    </recommendedName>
    <alternativeName>
        <fullName>Prostate secreted seminal plasma protein</fullName>
    </alternativeName>
    <alternativeName>
        <fullName>Prostate secretory protein of 94 amino acids</fullName>
        <shortName>PSP-94</shortName>
        <shortName>PSP94</shortName>
    </alternativeName>
</protein>
<feature type="signal peptide" evidence="1">
    <location>
        <begin position="1"/>
        <end position="20"/>
    </location>
</feature>
<feature type="chain" id="PRO_0000019271" description="Beta-microseminoprotein">
    <location>
        <begin position="21"/>
        <end position="114"/>
    </location>
</feature>
<feature type="disulfide bond" evidence="2">
    <location>
        <begin position="22"/>
        <end position="70"/>
    </location>
</feature>
<feature type="disulfide bond" evidence="2">
    <location>
        <begin position="38"/>
        <end position="62"/>
    </location>
</feature>
<feature type="disulfide bond" evidence="2">
    <location>
        <begin position="57"/>
        <end position="93"/>
    </location>
</feature>
<feature type="disulfide bond" evidence="2">
    <location>
        <begin position="60"/>
        <end position="69"/>
    </location>
</feature>
<feature type="disulfide bond" evidence="2">
    <location>
        <begin position="84"/>
        <end position="107"/>
    </location>
</feature>
<accession>Q28767</accession>
<gene>
    <name type="primary">MSMB</name>
    <name type="synonym">PSP94</name>
</gene>
<evidence type="ECO:0000250" key="1"/>
<evidence type="ECO:0000250" key="2">
    <source>
        <dbReference type="UniProtKB" id="P08118"/>
    </source>
</evidence>
<evidence type="ECO:0000305" key="3"/>
<dbReference type="EMBL" id="U49786">
    <property type="protein sequence ID" value="AAB62726.1"/>
    <property type="molecule type" value="mRNA"/>
</dbReference>
<dbReference type="RefSeq" id="NP_001106120.1">
    <property type="nucleotide sequence ID" value="NM_001112650.1"/>
</dbReference>
<dbReference type="SMR" id="Q28767"/>
<dbReference type="STRING" id="9555.ENSPANP00000020168"/>
<dbReference type="GeneID" id="100126742"/>
<dbReference type="KEGG" id="panu:100126742"/>
<dbReference type="CTD" id="4477"/>
<dbReference type="eggNOG" id="ENOG502SF48">
    <property type="taxonomic scope" value="Eukaryota"/>
</dbReference>
<dbReference type="OrthoDB" id="6479at314294"/>
<dbReference type="Proteomes" id="UP000028761">
    <property type="component" value="Unplaced"/>
</dbReference>
<dbReference type="GO" id="GO:0005576">
    <property type="term" value="C:extracellular region"/>
    <property type="evidence" value="ECO:0007669"/>
    <property type="project" value="UniProtKB-SubCell"/>
</dbReference>
<dbReference type="FunFam" id="2.10.70.10:FF:000137">
    <property type="entry name" value="Beta-microseminoprotein"/>
    <property type="match status" value="1"/>
</dbReference>
<dbReference type="Gene3D" id="2.20.25.590">
    <property type="match status" value="1"/>
</dbReference>
<dbReference type="Gene3D" id="2.10.70.10">
    <property type="entry name" value="Complement Module, domain 1"/>
    <property type="match status" value="1"/>
</dbReference>
<dbReference type="InterPro" id="IPR008735">
    <property type="entry name" value="PSP94"/>
</dbReference>
<dbReference type="PANTHER" id="PTHR10500">
    <property type="entry name" value="BETA-MICROSEMINOPROTEIN"/>
    <property type="match status" value="1"/>
</dbReference>
<dbReference type="PANTHER" id="PTHR10500:SF8">
    <property type="entry name" value="BETA-MICROSEMINOPROTEIN"/>
    <property type="match status" value="1"/>
</dbReference>
<dbReference type="Pfam" id="PF05825">
    <property type="entry name" value="PSP94"/>
    <property type="match status" value="1"/>
</dbReference>
<organism>
    <name type="scientific">Papio anubis</name>
    <name type="common">Olive baboon</name>
    <dbReference type="NCBI Taxonomy" id="9555"/>
    <lineage>
        <taxon>Eukaryota</taxon>
        <taxon>Metazoa</taxon>
        <taxon>Chordata</taxon>
        <taxon>Craniata</taxon>
        <taxon>Vertebrata</taxon>
        <taxon>Euteleostomi</taxon>
        <taxon>Mammalia</taxon>
        <taxon>Eutheria</taxon>
        <taxon>Euarchontoglires</taxon>
        <taxon>Primates</taxon>
        <taxon>Haplorrhini</taxon>
        <taxon>Catarrhini</taxon>
        <taxon>Cercopithecidae</taxon>
        <taxon>Cercopithecinae</taxon>
        <taxon>Papio</taxon>
    </lineage>
</organism>
<comment type="subunit">
    <text evidence="1">Homodimer; Interacts with PI16.</text>
</comment>
<comment type="subcellular location">
    <subcellularLocation>
        <location>Secreted</location>
    </subcellularLocation>
    <text evidence="1">Sperm surface.</text>
</comment>
<comment type="similarity">
    <text evidence="3">Belongs to the beta-microseminoprotein family.</text>
</comment>
<sequence length="114" mass="13013">MNVLLGGFVIFATFVTLCNASCSFMPNERFPGDSTRECTDLKGNKHPINSKWQTDNCEACTCYETEIICCTLIATPVGYDKNKCQRIFKKEECKYIVVEKKNPKKTCPIDQWIL</sequence>